<proteinExistence type="inferred from homology"/>
<gene>
    <name evidence="1" type="primary">ihfB</name>
    <name evidence="1" type="synonym">himD</name>
    <name type="ordered locus">RSc0910</name>
    <name type="ORF">RS04505</name>
</gene>
<organism>
    <name type="scientific">Ralstonia nicotianae (strain ATCC BAA-1114 / GMI1000)</name>
    <name type="common">Ralstonia solanacearum</name>
    <dbReference type="NCBI Taxonomy" id="267608"/>
    <lineage>
        <taxon>Bacteria</taxon>
        <taxon>Pseudomonadati</taxon>
        <taxon>Pseudomonadota</taxon>
        <taxon>Betaproteobacteria</taxon>
        <taxon>Burkholderiales</taxon>
        <taxon>Burkholderiaceae</taxon>
        <taxon>Ralstonia</taxon>
        <taxon>Ralstonia solanacearum species complex</taxon>
    </lineage>
</organism>
<dbReference type="EMBL" id="AL646052">
    <property type="protein sequence ID" value="CAD14612.1"/>
    <property type="molecule type" value="Genomic_DNA"/>
</dbReference>
<dbReference type="SMR" id="Q8Y0Y3"/>
<dbReference type="STRING" id="267608.RSc0910"/>
<dbReference type="EnsemblBacteria" id="CAD14612">
    <property type="protein sequence ID" value="CAD14612"/>
    <property type="gene ID" value="RSc0910"/>
</dbReference>
<dbReference type="KEGG" id="rso:RSc0910"/>
<dbReference type="eggNOG" id="COG0776">
    <property type="taxonomic scope" value="Bacteria"/>
</dbReference>
<dbReference type="HOGENOM" id="CLU_105066_2_0_4"/>
<dbReference type="Proteomes" id="UP000001436">
    <property type="component" value="Chromosome"/>
</dbReference>
<dbReference type="GO" id="GO:0005694">
    <property type="term" value="C:chromosome"/>
    <property type="evidence" value="ECO:0007669"/>
    <property type="project" value="InterPro"/>
</dbReference>
<dbReference type="GO" id="GO:0005829">
    <property type="term" value="C:cytosol"/>
    <property type="evidence" value="ECO:0007669"/>
    <property type="project" value="TreeGrafter"/>
</dbReference>
<dbReference type="GO" id="GO:0003677">
    <property type="term" value="F:DNA binding"/>
    <property type="evidence" value="ECO:0007669"/>
    <property type="project" value="UniProtKB-UniRule"/>
</dbReference>
<dbReference type="GO" id="GO:0030527">
    <property type="term" value="F:structural constituent of chromatin"/>
    <property type="evidence" value="ECO:0007669"/>
    <property type="project" value="InterPro"/>
</dbReference>
<dbReference type="GO" id="GO:0006310">
    <property type="term" value="P:DNA recombination"/>
    <property type="evidence" value="ECO:0007669"/>
    <property type="project" value="UniProtKB-UniRule"/>
</dbReference>
<dbReference type="GO" id="GO:0006355">
    <property type="term" value="P:regulation of DNA-templated transcription"/>
    <property type="evidence" value="ECO:0007669"/>
    <property type="project" value="UniProtKB-UniRule"/>
</dbReference>
<dbReference type="GO" id="GO:0006417">
    <property type="term" value="P:regulation of translation"/>
    <property type="evidence" value="ECO:0007669"/>
    <property type="project" value="UniProtKB-UniRule"/>
</dbReference>
<dbReference type="CDD" id="cd13836">
    <property type="entry name" value="IHF_B"/>
    <property type="match status" value="1"/>
</dbReference>
<dbReference type="Gene3D" id="4.10.520.10">
    <property type="entry name" value="IHF-like DNA-binding proteins"/>
    <property type="match status" value="1"/>
</dbReference>
<dbReference type="HAMAP" id="MF_00381">
    <property type="entry name" value="IHF_beta"/>
    <property type="match status" value="1"/>
</dbReference>
<dbReference type="InterPro" id="IPR000119">
    <property type="entry name" value="Hist_DNA-bd"/>
</dbReference>
<dbReference type="InterPro" id="IPR010992">
    <property type="entry name" value="IHF-like_DNA-bd_dom_sf"/>
</dbReference>
<dbReference type="InterPro" id="IPR005685">
    <property type="entry name" value="IHF_beta"/>
</dbReference>
<dbReference type="NCBIfam" id="TIGR00988">
    <property type="entry name" value="hip"/>
    <property type="match status" value="1"/>
</dbReference>
<dbReference type="NCBIfam" id="NF001222">
    <property type="entry name" value="PRK00199.1"/>
    <property type="match status" value="1"/>
</dbReference>
<dbReference type="PANTHER" id="PTHR33175">
    <property type="entry name" value="DNA-BINDING PROTEIN HU"/>
    <property type="match status" value="1"/>
</dbReference>
<dbReference type="PANTHER" id="PTHR33175:SF5">
    <property type="entry name" value="INTEGRATION HOST FACTOR SUBUNIT BETA"/>
    <property type="match status" value="1"/>
</dbReference>
<dbReference type="Pfam" id="PF00216">
    <property type="entry name" value="Bac_DNA_binding"/>
    <property type="match status" value="1"/>
</dbReference>
<dbReference type="PRINTS" id="PR01727">
    <property type="entry name" value="DNABINDINGHU"/>
</dbReference>
<dbReference type="SMART" id="SM00411">
    <property type="entry name" value="BHL"/>
    <property type="match status" value="1"/>
</dbReference>
<dbReference type="SUPFAM" id="SSF47729">
    <property type="entry name" value="IHF-like DNA-binding proteins"/>
    <property type="match status" value="1"/>
</dbReference>
<feature type="chain" id="PRO_0000105063" description="Integration host factor subunit beta">
    <location>
        <begin position="1"/>
        <end position="138"/>
    </location>
</feature>
<feature type="region of interest" description="Disordered" evidence="2">
    <location>
        <begin position="81"/>
        <end position="138"/>
    </location>
</feature>
<feature type="compositionally biased region" description="Basic and acidic residues" evidence="2">
    <location>
        <begin position="81"/>
        <end position="98"/>
    </location>
</feature>
<reference key="1">
    <citation type="journal article" date="2002" name="Nature">
        <title>Genome sequence of the plant pathogen Ralstonia solanacearum.</title>
        <authorList>
            <person name="Salanoubat M."/>
            <person name="Genin S."/>
            <person name="Artiguenave F."/>
            <person name="Gouzy J."/>
            <person name="Mangenot S."/>
            <person name="Arlat M."/>
            <person name="Billault A."/>
            <person name="Brottier P."/>
            <person name="Camus J.-C."/>
            <person name="Cattolico L."/>
            <person name="Chandler M."/>
            <person name="Choisne N."/>
            <person name="Claudel-Renard C."/>
            <person name="Cunnac S."/>
            <person name="Demange N."/>
            <person name="Gaspin C."/>
            <person name="Lavie M."/>
            <person name="Moisan A."/>
            <person name="Robert C."/>
            <person name="Saurin W."/>
            <person name="Schiex T."/>
            <person name="Siguier P."/>
            <person name="Thebault P."/>
            <person name="Whalen M."/>
            <person name="Wincker P."/>
            <person name="Levy M."/>
            <person name="Weissenbach J."/>
            <person name="Boucher C.A."/>
        </authorList>
    </citation>
    <scope>NUCLEOTIDE SEQUENCE [LARGE SCALE GENOMIC DNA]</scope>
    <source>
        <strain>ATCC BAA-1114 / GMI1000</strain>
    </source>
</reference>
<evidence type="ECO:0000255" key="1">
    <source>
        <dbReference type="HAMAP-Rule" id="MF_00381"/>
    </source>
</evidence>
<evidence type="ECO:0000256" key="2">
    <source>
        <dbReference type="SAM" id="MobiDB-lite"/>
    </source>
</evidence>
<comment type="function">
    <text evidence="1">This protein is one of the two subunits of integration host factor, a specific DNA-binding protein that functions in genetic recombination as well as in transcriptional and translational control.</text>
</comment>
<comment type="subunit">
    <text evidence="1">Heterodimer of an alpha and a beta chain.</text>
</comment>
<comment type="similarity">
    <text evidence="1">Belongs to the bacterial histone-like protein family.</text>
</comment>
<name>IHFB_RALN1</name>
<keyword id="KW-0233">DNA recombination</keyword>
<keyword id="KW-0238">DNA-binding</keyword>
<keyword id="KW-1185">Reference proteome</keyword>
<keyword id="KW-0804">Transcription</keyword>
<keyword id="KW-0805">Transcription regulation</keyword>
<keyword id="KW-0810">Translation regulation</keyword>
<accession>Q8Y0Y3</accession>
<sequence>MTKSELVEKLAARFPQLLLRDADIAVKTILDAMSDALADGHRIEIRGFGSFGLNRRPPRVGRNPKSGEKVLVPEKRVPHFKAGKELRERVDRSLERQGDSSSEGEPVSLTAVKAARQAGGHHAAGFPAEATPTLVMSR</sequence>
<protein>
    <recommendedName>
        <fullName evidence="1">Integration host factor subunit beta</fullName>
        <shortName evidence="1">IHF-beta</shortName>
    </recommendedName>
</protein>